<dbReference type="EC" id="2.7.11.1"/>
<dbReference type="EMBL" id="AAFI02000013">
    <property type="protein sequence ID" value="EAL69863.1"/>
    <property type="molecule type" value="Genomic_DNA"/>
</dbReference>
<dbReference type="RefSeq" id="XP_643791.1">
    <property type="nucleotide sequence ID" value="XM_638699.1"/>
</dbReference>
<dbReference type="SMR" id="Q869X3"/>
<dbReference type="FunCoup" id="Q869X3">
    <property type="interactions" value="274"/>
</dbReference>
<dbReference type="PaxDb" id="44689-DDB0229851"/>
<dbReference type="EnsemblProtists" id="EAL69863">
    <property type="protein sequence ID" value="EAL69863"/>
    <property type="gene ID" value="DDB_G0275165"/>
</dbReference>
<dbReference type="GeneID" id="8619836"/>
<dbReference type="KEGG" id="ddi:DDB_G0275165"/>
<dbReference type="dictyBase" id="DDB_G0275165"/>
<dbReference type="VEuPathDB" id="AmoebaDB:DDB_G0275165"/>
<dbReference type="eggNOG" id="ENOG502QTAM">
    <property type="taxonomic scope" value="Eukaryota"/>
</dbReference>
<dbReference type="HOGENOM" id="CLU_316741_0_0_1"/>
<dbReference type="InParanoid" id="Q869X3"/>
<dbReference type="OMA" id="CHIHATS"/>
<dbReference type="PRO" id="PR:Q869X3"/>
<dbReference type="Proteomes" id="UP000002195">
    <property type="component" value="Chromosome 2"/>
</dbReference>
<dbReference type="GO" id="GO:0005737">
    <property type="term" value="C:cytoplasm"/>
    <property type="evidence" value="ECO:0000318"/>
    <property type="project" value="GO_Central"/>
</dbReference>
<dbReference type="GO" id="GO:0005524">
    <property type="term" value="F:ATP binding"/>
    <property type="evidence" value="ECO:0007669"/>
    <property type="project" value="UniProtKB-KW"/>
</dbReference>
<dbReference type="GO" id="GO:0004672">
    <property type="term" value="F:protein kinase activity"/>
    <property type="evidence" value="ECO:0000318"/>
    <property type="project" value="GO_Central"/>
</dbReference>
<dbReference type="GO" id="GO:0106310">
    <property type="term" value="F:protein serine kinase activity"/>
    <property type="evidence" value="ECO:0007669"/>
    <property type="project" value="RHEA"/>
</dbReference>
<dbReference type="GO" id="GO:0004674">
    <property type="term" value="F:protein serine/threonine kinase activity"/>
    <property type="evidence" value="ECO:0007669"/>
    <property type="project" value="UniProtKB-KW"/>
</dbReference>
<dbReference type="GO" id="GO:0007165">
    <property type="term" value="P:signal transduction"/>
    <property type="evidence" value="ECO:0000318"/>
    <property type="project" value="GO_Central"/>
</dbReference>
<dbReference type="CDD" id="cd13999">
    <property type="entry name" value="STKc_MAP3K-like"/>
    <property type="match status" value="1"/>
</dbReference>
<dbReference type="Gene3D" id="3.30.200.20">
    <property type="entry name" value="Phosphorylase Kinase, domain 1"/>
    <property type="match status" value="1"/>
</dbReference>
<dbReference type="Gene3D" id="1.10.510.10">
    <property type="entry name" value="Transferase(Phosphotransferase) domain 1"/>
    <property type="match status" value="1"/>
</dbReference>
<dbReference type="InterPro" id="IPR050940">
    <property type="entry name" value="Actin_reg-Ser/Thr_kinase"/>
</dbReference>
<dbReference type="InterPro" id="IPR011009">
    <property type="entry name" value="Kinase-like_dom_sf"/>
</dbReference>
<dbReference type="InterPro" id="IPR000719">
    <property type="entry name" value="Prot_kinase_dom"/>
</dbReference>
<dbReference type="InterPro" id="IPR001245">
    <property type="entry name" value="Ser-Thr/Tyr_kinase_cat_dom"/>
</dbReference>
<dbReference type="InterPro" id="IPR008271">
    <property type="entry name" value="Ser/Thr_kinase_AS"/>
</dbReference>
<dbReference type="PANTHER" id="PTHR46485:SF5">
    <property type="entry name" value="CENTER DIVIDER, ISOFORM A"/>
    <property type="match status" value="1"/>
</dbReference>
<dbReference type="PANTHER" id="PTHR46485">
    <property type="entry name" value="LIM DOMAIN KINASE 1"/>
    <property type="match status" value="1"/>
</dbReference>
<dbReference type="Pfam" id="PF00069">
    <property type="entry name" value="Pkinase"/>
    <property type="match status" value="1"/>
</dbReference>
<dbReference type="PRINTS" id="PR00109">
    <property type="entry name" value="TYRKINASE"/>
</dbReference>
<dbReference type="SMART" id="SM00220">
    <property type="entry name" value="S_TKc"/>
    <property type="match status" value="1"/>
</dbReference>
<dbReference type="SUPFAM" id="SSF56112">
    <property type="entry name" value="Protein kinase-like (PK-like)"/>
    <property type="match status" value="1"/>
</dbReference>
<dbReference type="PROSITE" id="PS50011">
    <property type="entry name" value="PROTEIN_KINASE_DOM"/>
    <property type="match status" value="1"/>
</dbReference>
<dbReference type="PROSITE" id="PS00108">
    <property type="entry name" value="PROTEIN_KINASE_ST"/>
    <property type="match status" value="1"/>
</dbReference>
<feature type="chain" id="PRO_0000355161" description="Probable serine/threonine-protein kinase DDB_G0275165">
    <location>
        <begin position="1"/>
        <end position="921"/>
    </location>
</feature>
<feature type="domain" description="Protein kinase" evidence="1">
    <location>
        <begin position="23"/>
        <end position="277"/>
    </location>
</feature>
<feature type="region of interest" description="Disordered" evidence="3">
    <location>
        <begin position="289"/>
        <end position="453"/>
    </location>
</feature>
<feature type="region of interest" description="Disordered" evidence="3">
    <location>
        <begin position="465"/>
        <end position="492"/>
    </location>
</feature>
<feature type="region of interest" description="Disordered" evidence="3">
    <location>
        <begin position="530"/>
        <end position="571"/>
    </location>
</feature>
<feature type="region of interest" description="Disordered" evidence="3">
    <location>
        <begin position="583"/>
        <end position="653"/>
    </location>
</feature>
<feature type="region of interest" description="Disordered" evidence="3">
    <location>
        <begin position="671"/>
        <end position="698"/>
    </location>
</feature>
<feature type="region of interest" description="Disordered" evidence="3">
    <location>
        <begin position="737"/>
        <end position="813"/>
    </location>
</feature>
<feature type="region of interest" description="Disordered" evidence="3">
    <location>
        <begin position="833"/>
        <end position="858"/>
    </location>
</feature>
<feature type="region of interest" description="Disordered" evidence="3">
    <location>
        <begin position="877"/>
        <end position="921"/>
    </location>
</feature>
<feature type="compositionally biased region" description="Low complexity" evidence="3">
    <location>
        <begin position="310"/>
        <end position="352"/>
    </location>
</feature>
<feature type="compositionally biased region" description="Low complexity" evidence="3">
    <location>
        <begin position="400"/>
        <end position="412"/>
    </location>
</feature>
<feature type="compositionally biased region" description="Low complexity" evidence="3">
    <location>
        <begin position="429"/>
        <end position="445"/>
    </location>
</feature>
<feature type="compositionally biased region" description="Low complexity" evidence="3">
    <location>
        <begin position="539"/>
        <end position="550"/>
    </location>
</feature>
<feature type="compositionally biased region" description="Low complexity" evidence="3">
    <location>
        <begin position="583"/>
        <end position="638"/>
    </location>
</feature>
<feature type="compositionally biased region" description="Polar residues" evidence="3">
    <location>
        <begin position="643"/>
        <end position="653"/>
    </location>
</feature>
<feature type="compositionally biased region" description="Low complexity" evidence="3">
    <location>
        <begin position="748"/>
        <end position="775"/>
    </location>
</feature>
<feature type="compositionally biased region" description="Low complexity" evidence="3">
    <location>
        <begin position="842"/>
        <end position="857"/>
    </location>
</feature>
<feature type="compositionally biased region" description="Low complexity" evidence="3">
    <location>
        <begin position="892"/>
        <end position="910"/>
    </location>
</feature>
<feature type="active site" description="Proton acceptor" evidence="1 2">
    <location>
        <position position="147"/>
    </location>
</feature>
<feature type="binding site" evidence="1">
    <location>
        <begin position="29"/>
        <end position="37"/>
    </location>
    <ligand>
        <name>ATP</name>
        <dbReference type="ChEBI" id="CHEBI:30616"/>
    </ligand>
</feature>
<feature type="binding site" evidence="1">
    <location>
        <position position="50"/>
    </location>
    <ligand>
        <name>ATP</name>
        <dbReference type="ChEBI" id="CHEBI:30616"/>
    </ligand>
</feature>
<comment type="catalytic activity">
    <reaction>
        <text>L-seryl-[protein] + ATP = O-phospho-L-seryl-[protein] + ADP + H(+)</text>
        <dbReference type="Rhea" id="RHEA:17989"/>
        <dbReference type="Rhea" id="RHEA-COMP:9863"/>
        <dbReference type="Rhea" id="RHEA-COMP:11604"/>
        <dbReference type="ChEBI" id="CHEBI:15378"/>
        <dbReference type="ChEBI" id="CHEBI:29999"/>
        <dbReference type="ChEBI" id="CHEBI:30616"/>
        <dbReference type="ChEBI" id="CHEBI:83421"/>
        <dbReference type="ChEBI" id="CHEBI:456216"/>
        <dbReference type="EC" id="2.7.11.1"/>
    </reaction>
</comment>
<comment type="catalytic activity">
    <reaction>
        <text>L-threonyl-[protein] + ATP = O-phospho-L-threonyl-[protein] + ADP + H(+)</text>
        <dbReference type="Rhea" id="RHEA:46608"/>
        <dbReference type="Rhea" id="RHEA-COMP:11060"/>
        <dbReference type="Rhea" id="RHEA-COMP:11605"/>
        <dbReference type="ChEBI" id="CHEBI:15378"/>
        <dbReference type="ChEBI" id="CHEBI:30013"/>
        <dbReference type="ChEBI" id="CHEBI:30616"/>
        <dbReference type="ChEBI" id="CHEBI:61977"/>
        <dbReference type="ChEBI" id="CHEBI:456216"/>
        <dbReference type="EC" id="2.7.11.1"/>
    </reaction>
</comment>
<comment type="similarity">
    <text evidence="4">Belongs to the protein kinase superfamily. TKL Ser/Thr protein kinase family.</text>
</comment>
<name>Y9851_DICDI</name>
<proteinExistence type="inferred from homology"/>
<evidence type="ECO:0000255" key="1">
    <source>
        <dbReference type="PROSITE-ProRule" id="PRU00159"/>
    </source>
</evidence>
<evidence type="ECO:0000255" key="2">
    <source>
        <dbReference type="PROSITE-ProRule" id="PRU10027"/>
    </source>
</evidence>
<evidence type="ECO:0000256" key="3">
    <source>
        <dbReference type="SAM" id="MobiDB-lite"/>
    </source>
</evidence>
<evidence type="ECO:0000305" key="4"/>
<keyword id="KW-0067">ATP-binding</keyword>
<keyword id="KW-0418">Kinase</keyword>
<keyword id="KW-0547">Nucleotide-binding</keyword>
<keyword id="KW-1185">Reference proteome</keyword>
<keyword id="KW-0723">Serine/threonine-protein kinase</keyword>
<keyword id="KW-0808">Transferase</keyword>
<gene>
    <name type="ORF">DDB_G0275165</name>
</gene>
<sequence length="921" mass="102067">MSKLFQDSNKRMSRIVDYDEIKFDPLSIIGSGGFGKVYQGVLNGKEIGIKKITISDNDPNRDILLKFLEREIYTLKMLSHPNVIKFYGIAEKERSLFLLTELVSGGDLHWYIKNKSIDITWKLKVKIARDIAASMAYLHENGVIHRDLKSTNLLVAENWVIKVCDMGLARKMDKSEKSKMTICGTDDWMAPEVLIGEEYDASCDVFSFGMVLIELITRENLTPRIRNEDLGVDQKFFLSKVPADCPKELLRLVSECCKVAPSGRPSASNILGLLEYILESELIVNSGGDYEPPLRSFKPPELHLPLNEKNNNNKNNNNNNNNNNNNNNNNNNNNNNNNNNNNNNNNNNNNNNLGNSGNIYDDFSFPRPYQPDDSAVDNINNNGNDDSHFSFPRPYQPGQSNINGGVNNNNSNDESHFSFPRPYQPGQSNINGCVNNNNNNSNNNNDSHFSFPRPHQTSVVILNDRGEEEPLVVSQKDQLEHDLEGGDDNEEDEMKQLKSQLNYSKFSFPRPYQSSKIISFNETELLSFPRPWNPESEENNNNKNNNNNEKSLLEDPKYSFPRPYNPDSDSNLSFKSTAKVITNPTPLTTTTTTTTATATTTSSSSTNSKVTTNSTSLPTTTTTTTTTTATTSSSSLSSIGKPPQSTYKVPTTINPSTSQRVITIPSRIVTSTATAQPKSRSNSNPPKPTVVISNSNNNFNDIVKPSSTIVNQNKTTTQPTTLINAPQKVTTPVNKQIQPLHKSNESVTVAATTATTPTTATSTTIKSSPTTPTSTNQNIEQIKITTPKDEDENKSETNDGGGDTVSHRRSRSLDIKNSTKAIIKKFEELTRFSSQQSNLVHQPSSSSSSTKQPPTSQFLQNPRMEAKLSFAQETLVFEKSPSTSPKSLDIPTSSSLTSNSNSSIPAPSSPTKKTFWNKPKK</sequence>
<accession>Q869X3</accession>
<accession>Q554C0</accession>
<protein>
    <recommendedName>
        <fullName>Probable serine/threonine-protein kinase DDB_G0275165</fullName>
        <ecNumber>2.7.11.1</ecNumber>
    </recommendedName>
</protein>
<reference key="1">
    <citation type="journal article" date="2002" name="Nature">
        <title>Sequence and analysis of chromosome 2 of Dictyostelium discoideum.</title>
        <authorList>
            <person name="Gloeckner G."/>
            <person name="Eichinger L."/>
            <person name="Szafranski K."/>
            <person name="Pachebat J.A."/>
            <person name="Bankier A.T."/>
            <person name="Dear P.H."/>
            <person name="Lehmann R."/>
            <person name="Baumgart C."/>
            <person name="Parra G."/>
            <person name="Abril J.F."/>
            <person name="Guigo R."/>
            <person name="Kumpf K."/>
            <person name="Tunggal B."/>
            <person name="Cox E.C."/>
            <person name="Quail M.A."/>
            <person name="Platzer M."/>
            <person name="Rosenthal A."/>
            <person name="Noegel A.A."/>
        </authorList>
    </citation>
    <scope>NUCLEOTIDE SEQUENCE [LARGE SCALE GENOMIC DNA]</scope>
    <source>
        <strain>AX4</strain>
    </source>
</reference>
<reference key="2">
    <citation type="journal article" date="2005" name="Nature">
        <title>The genome of the social amoeba Dictyostelium discoideum.</title>
        <authorList>
            <person name="Eichinger L."/>
            <person name="Pachebat J.A."/>
            <person name="Gloeckner G."/>
            <person name="Rajandream M.A."/>
            <person name="Sucgang R."/>
            <person name="Berriman M."/>
            <person name="Song J."/>
            <person name="Olsen R."/>
            <person name="Szafranski K."/>
            <person name="Xu Q."/>
            <person name="Tunggal B."/>
            <person name="Kummerfeld S."/>
            <person name="Madera M."/>
            <person name="Konfortov B.A."/>
            <person name="Rivero F."/>
            <person name="Bankier A.T."/>
            <person name="Lehmann R."/>
            <person name="Hamlin N."/>
            <person name="Davies R."/>
            <person name="Gaudet P."/>
            <person name="Fey P."/>
            <person name="Pilcher K."/>
            <person name="Chen G."/>
            <person name="Saunders D."/>
            <person name="Sodergren E.J."/>
            <person name="Davis P."/>
            <person name="Kerhornou A."/>
            <person name="Nie X."/>
            <person name="Hall N."/>
            <person name="Anjard C."/>
            <person name="Hemphill L."/>
            <person name="Bason N."/>
            <person name="Farbrother P."/>
            <person name="Desany B."/>
            <person name="Just E."/>
            <person name="Morio T."/>
            <person name="Rost R."/>
            <person name="Churcher C.M."/>
            <person name="Cooper J."/>
            <person name="Haydock S."/>
            <person name="van Driessche N."/>
            <person name="Cronin A."/>
            <person name="Goodhead I."/>
            <person name="Muzny D.M."/>
            <person name="Mourier T."/>
            <person name="Pain A."/>
            <person name="Lu M."/>
            <person name="Harper D."/>
            <person name="Lindsay R."/>
            <person name="Hauser H."/>
            <person name="James K.D."/>
            <person name="Quiles M."/>
            <person name="Madan Babu M."/>
            <person name="Saito T."/>
            <person name="Buchrieser C."/>
            <person name="Wardroper A."/>
            <person name="Felder M."/>
            <person name="Thangavelu M."/>
            <person name="Johnson D."/>
            <person name="Knights A."/>
            <person name="Loulseged H."/>
            <person name="Mungall K.L."/>
            <person name="Oliver K."/>
            <person name="Price C."/>
            <person name="Quail M.A."/>
            <person name="Urushihara H."/>
            <person name="Hernandez J."/>
            <person name="Rabbinowitsch E."/>
            <person name="Steffen D."/>
            <person name="Sanders M."/>
            <person name="Ma J."/>
            <person name="Kohara Y."/>
            <person name="Sharp S."/>
            <person name="Simmonds M.N."/>
            <person name="Spiegler S."/>
            <person name="Tivey A."/>
            <person name="Sugano S."/>
            <person name="White B."/>
            <person name="Walker D."/>
            <person name="Woodward J.R."/>
            <person name="Winckler T."/>
            <person name="Tanaka Y."/>
            <person name="Shaulsky G."/>
            <person name="Schleicher M."/>
            <person name="Weinstock G.M."/>
            <person name="Rosenthal A."/>
            <person name="Cox E.C."/>
            <person name="Chisholm R.L."/>
            <person name="Gibbs R.A."/>
            <person name="Loomis W.F."/>
            <person name="Platzer M."/>
            <person name="Kay R.R."/>
            <person name="Williams J.G."/>
            <person name="Dear P.H."/>
            <person name="Noegel A.A."/>
            <person name="Barrell B.G."/>
            <person name="Kuspa A."/>
        </authorList>
    </citation>
    <scope>NUCLEOTIDE SEQUENCE [LARGE SCALE GENOMIC DNA]</scope>
    <source>
        <strain>AX4</strain>
    </source>
</reference>
<organism>
    <name type="scientific">Dictyostelium discoideum</name>
    <name type="common">Social amoeba</name>
    <dbReference type="NCBI Taxonomy" id="44689"/>
    <lineage>
        <taxon>Eukaryota</taxon>
        <taxon>Amoebozoa</taxon>
        <taxon>Evosea</taxon>
        <taxon>Eumycetozoa</taxon>
        <taxon>Dictyostelia</taxon>
        <taxon>Dictyosteliales</taxon>
        <taxon>Dictyosteliaceae</taxon>
        <taxon>Dictyostelium</taxon>
    </lineage>
</organism>